<proteinExistence type="inferred from homology"/>
<reference key="1">
    <citation type="submission" date="2006-02" db="EMBL/GenBank/DDBJ databases">
        <title>Complete sequence of chromosome of Rhodoferax ferrireducens DSM 15236.</title>
        <authorList>
            <person name="Copeland A."/>
            <person name="Lucas S."/>
            <person name="Lapidus A."/>
            <person name="Barry K."/>
            <person name="Detter J.C."/>
            <person name="Glavina del Rio T."/>
            <person name="Hammon N."/>
            <person name="Israni S."/>
            <person name="Pitluck S."/>
            <person name="Brettin T."/>
            <person name="Bruce D."/>
            <person name="Han C."/>
            <person name="Tapia R."/>
            <person name="Gilna P."/>
            <person name="Kiss H."/>
            <person name="Schmutz J."/>
            <person name="Larimer F."/>
            <person name="Land M."/>
            <person name="Kyrpides N."/>
            <person name="Ivanova N."/>
            <person name="Richardson P."/>
        </authorList>
    </citation>
    <scope>NUCLEOTIDE SEQUENCE [LARGE SCALE GENOMIC DNA]</scope>
    <source>
        <strain>ATCC BAA-621 / DSM 15236 / T118</strain>
    </source>
</reference>
<name>RISB_ALBFT</name>
<protein>
    <recommendedName>
        <fullName evidence="1">6,7-dimethyl-8-ribityllumazine synthase</fullName>
        <shortName evidence="1">DMRL synthase</shortName>
        <shortName evidence="1">LS</shortName>
        <shortName evidence="1">Lumazine synthase</shortName>
        <ecNumber evidence="1">2.5.1.78</ecNumber>
    </recommendedName>
</protein>
<keyword id="KW-1185">Reference proteome</keyword>
<keyword id="KW-0686">Riboflavin biosynthesis</keyword>
<keyword id="KW-0808">Transferase</keyword>
<sequence>MLDANQGTLAASDSRLNGKKLRIGIVQARFNEPITNTLAQACKAELLALGVAEKHIDLVQVPGALEVPVALLALAEKLEYDALVAVGCIIRGETYHFELVANESGAGVSRVALDYQIPIANAILTTENLAQAIARQTEKGRDAARVAVEMANLLSDI</sequence>
<gene>
    <name evidence="1" type="primary">ribH</name>
    <name type="ordered locus">Rfer_2669</name>
</gene>
<accession>Q21V18</accession>
<dbReference type="EC" id="2.5.1.78" evidence="1"/>
<dbReference type="EMBL" id="CP000267">
    <property type="protein sequence ID" value="ABD70385.1"/>
    <property type="molecule type" value="Genomic_DNA"/>
</dbReference>
<dbReference type="RefSeq" id="WP_011464953.1">
    <property type="nucleotide sequence ID" value="NC_007908.1"/>
</dbReference>
<dbReference type="SMR" id="Q21V18"/>
<dbReference type="STRING" id="338969.Rfer_2669"/>
<dbReference type="KEGG" id="rfr:Rfer_2669"/>
<dbReference type="eggNOG" id="COG0054">
    <property type="taxonomic scope" value="Bacteria"/>
</dbReference>
<dbReference type="HOGENOM" id="CLU_089358_1_2_4"/>
<dbReference type="OrthoDB" id="9809709at2"/>
<dbReference type="UniPathway" id="UPA00275">
    <property type="reaction ID" value="UER00404"/>
</dbReference>
<dbReference type="Proteomes" id="UP000008332">
    <property type="component" value="Chromosome"/>
</dbReference>
<dbReference type="GO" id="GO:0005829">
    <property type="term" value="C:cytosol"/>
    <property type="evidence" value="ECO:0007669"/>
    <property type="project" value="TreeGrafter"/>
</dbReference>
<dbReference type="GO" id="GO:0009349">
    <property type="term" value="C:riboflavin synthase complex"/>
    <property type="evidence" value="ECO:0007669"/>
    <property type="project" value="InterPro"/>
</dbReference>
<dbReference type="GO" id="GO:0000906">
    <property type="term" value="F:6,7-dimethyl-8-ribityllumazine synthase activity"/>
    <property type="evidence" value="ECO:0007669"/>
    <property type="project" value="UniProtKB-UniRule"/>
</dbReference>
<dbReference type="GO" id="GO:0009231">
    <property type="term" value="P:riboflavin biosynthetic process"/>
    <property type="evidence" value="ECO:0007669"/>
    <property type="project" value="UniProtKB-UniRule"/>
</dbReference>
<dbReference type="CDD" id="cd09209">
    <property type="entry name" value="Lumazine_synthase-I"/>
    <property type="match status" value="1"/>
</dbReference>
<dbReference type="Gene3D" id="3.40.50.960">
    <property type="entry name" value="Lumazine/riboflavin synthase"/>
    <property type="match status" value="1"/>
</dbReference>
<dbReference type="HAMAP" id="MF_00178">
    <property type="entry name" value="Lumazine_synth"/>
    <property type="match status" value="1"/>
</dbReference>
<dbReference type="InterPro" id="IPR034964">
    <property type="entry name" value="LS"/>
</dbReference>
<dbReference type="InterPro" id="IPR002180">
    <property type="entry name" value="LS/RS"/>
</dbReference>
<dbReference type="InterPro" id="IPR036467">
    <property type="entry name" value="LS/RS_sf"/>
</dbReference>
<dbReference type="NCBIfam" id="TIGR00114">
    <property type="entry name" value="lumazine-synth"/>
    <property type="match status" value="1"/>
</dbReference>
<dbReference type="PANTHER" id="PTHR21058:SF0">
    <property type="entry name" value="6,7-DIMETHYL-8-RIBITYLLUMAZINE SYNTHASE"/>
    <property type="match status" value="1"/>
</dbReference>
<dbReference type="PANTHER" id="PTHR21058">
    <property type="entry name" value="6,7-DIMETHYL-8-RIBITYLLUMAZINE SYNTHASE DMRL SYNTHASE LUMAZINE SYNTHASE"/>
    <property type="match status" value="1"/>
</dbReference>
<dbReference type="Pfam" id="PF00885">
    <property type="entry name" value="DMRL_synthase"/>
    <property type="match status" value="1"/>
</dbReference>
<dbReference type="SUPFAM" id="SSF52121">
    <property type="entry name" value="Lumazine synthase"/>
    <property type="match status" value="1"/>
</dbReference>
<comment type="function">
    <text evidence="1">Catalyzes the formation of 6,7-dimethyl-8-ribityllumazine by condensation of 5-amino-6-(D-ribitylamino)uracil with 3,4-dihydroxy-2-butanone 4-phosphate. This is the penultimate step in the biosynthesis of riboflavin.</text>
</comment>
<comment type="catalytic activity">
    <reaction evidence="1">
        <text>(2S)-2-hydroxy-3-oxobutyl phosphate + 5-amino-6-(D-ribitylamino)uracil = 6,7-dimethyl-8-(1-D-ribityl)lumazine + phosphate + 2 H2O + H(+)</text>
        <dbReference type="Rhea" id="RHEA:26152"/>
        <dbReference type="ChEBI" id="CHEBI:15377"/>
        <dbReference type="ChEBI" id="CHEBI:15378"/>
        <dbReference type="ChEBI" id="CHEBI:15934"/>
        <dbReference type="ChEBI" id="CHEBI:43474"/>
        <dbReference type="ChEBI" id="CHEBI:58201"/>
        <dbReference type="ChEBI" id="CHEBI:58830"/>
        <dbReference type="EC" id="2.5.1.78"/>
    </reaction>
</comment>
<comment type="pathway">
    <text evidence="1">Cofactor biosynthesis; riboflavin biosynthesis; riboflavin from 2-hydroxy-3-oxobutyl phosphate and 5-amino-6-(D-ribitylamino)uracil: step 1/2.</text>
</comment>
<comment type="similarity">
    <text evidence="1">Belongs to the DMRL synthase family.</text>
</comment>
<feature type="chain" id="PRO_1000040499" description="6,7-dimethyl-8-ribityllumazine synthase">
    <location>
        <begin position="1"/>
        <end position="157"/>
    </location>
</feature>
<feature type="active site" description="Proton donor" evidence="1">
    <location>
        <position position="96"/>
    </location>
</feature>
<feature type="binding site" evidence="1">
    <location>
        <position position="30"/>
    </location>
    <ligand>
        <name>5-amino-6-(D-ribitylamino)uracil</name>
        <dbReference type="ChEBI" id="CHEBI:15934"/>
    </ligand>
</feature>
<feature type="binding site" evidence="1">
    <location>
        <begin position="64"/>
        <end position="66"/>
    </location>
    <ligand>
        <name>5-amino-6-(D-ribitylamino)uracil</name>
        <dbReference type="ChEBI" id="CHEBI:15934"/>
    </ligand>
</feature>
<feature type="binding site" evidence="1">
    <location>
        <begin position="88"/>
        <end position="90"/>
    </location>
    <ligand>
        <name>5-amino-6-(D-ribitylamino)uracil</name>
        <dbReference type="ChEBI" id="CHEBI:15934"/>
    </ligand>
</feature>
<feature type="binding site" evidence="1">
    <location>
        <begin position="93"/>
        <end position="94"/>
    </location>
    <ligand>
        <name>(2S)-2-hydroxy-3-oxobutyl phosphate</name>
        <dbReference type="ChEBI" id="CHEBI:58830"/>
    </ligand>
</feature>
<feature type="binding site" evidence="1">
    <location>
        <position position="121"/>
    </location>
    <ligand>
        <name>5-amino-6-(D-ribitylamino)uracil</name>
        <dbReference type="ChEBI" id="CHEBI:15934"/>
    </ligand>
</feature>
<feature type="binding site" evidence="1">
    <location>
        <position position="135"/>
    </location>
    <ligand>
        <name>(2S)-2-hydroxy-3-oxobutyl phosphate</name>
        <dbReference type="ChEBI" id="CHEBI:58830"/>
    </ligand>
</feature>
<evidence type="ECO:0000255" key="1">
    <source>
        <dbReference type="HAMAP-Rule" id="MF_00178"/>
    </source>
</evidence>
<organism>
    <name type="scientific">Albidiferax ferrireducens (strain ATCC BAA-621 / DSM 15236 / T118)</name>
    <name type="common">Rhodoferax ferrireducens</name>
    <dbReference type="NCBI Taxonomy" id="338969"/>
    <lineage>
        <taxon>Bacteria</taxon>
        <taxon>Pseudomonadati</taxon>
        <taxon>Pseudomonadota</taxon>
        <taxon>Betaproteobacteria</taxon>
        <taxon>Burkholderiales</taxon>
        <taxon>Comamonadaceae</taxon>
        <taxon>Rhodoferax</taxon>
    </lineage>
</organism>